<dbReference type="EC" id="4.1.3.40" evidence="1"/>
<dbReference type="EMBL" id="BX936398">
    <property type="protein sequence ID" value="CAH19606.1"/>
    <property type="molecule type" value="Genomic_DNA"/>
</dbReference>
<dbReference type="RefSeq" id="WP_002209087.1">
    <property type="nucleotide sequence ID" value="NZ_CP009712.1"/>
</dbReference>
<dbReference type="SMR" id="Q66FH1"/>
<dbReference type="GeneID" id="57974294"/>
<dbReference type="KEGG" id="ypo:BZ17_2204"/>
<dbReference type="KEGG" id="yps:YPTB0366"/>
<dbReference type="PATRIC" id="fig|273123.14.peg.2333"/>
<dbReference type="UniPathway" id="UPA00232"/>
<dbReference type="Proteomes" id="UP000001011">
    <property type="component" value="Chromosome"/>
</dbReference>
<dbReference type="GO" id="GO:0005829">
    <property type="term" value="C:cytosol"/>
    <property type="evidence" value="ECO:0007669"/>
    <property type="project" value="TreeGrafter"/>
</dbReference>
<dbReference type="GO" id="GO:0008813">
    <property type="term" value="F:chorismate lyase activity"/>
    <property type="evidence" value="ECO:0007669"/>
    <property type="project" value="UniProtKB-UniRule"/>
</dbReference>
<dbReference type="GO" id="GO:0042866">
    <property type="term" value="P:pyruvate biosynthetic process"/>
    <property type="evidence" value="ECO:0007669"/>
    <property type="project" value="UniProtKB-UniRule"/>
</dbReference>
<dbReference type="GO" id="GO:0006744">
    <property type="term" value="P:ubiquinone biosynthetic process"/>
    <property type="evidence" value="ECO:0007669"/>
    <property type="project" value="UniProtKB-UniRule"/>
</dbReference>
<dbReference type="Gene3D" id="3.40.1410.10">
    <property type="entry name" value="Chorismate lyase-like"/>
    <property type="match status" value="1"/>
</dbReference>
<dbReference type="HAMAP" id="MF_01632">
    <property type="entry name" value="UbiC"/>
    <property type="match status" value="1"/>
</dbReference>
<dbReference type="InterPro" id="IPR007440">
    <property type="entry name" value="Chorismate--pyruvate_lyase"/>
</dbReference>
<dbReference type="InterPro" id="IPR028978">
    <property type="entry name" value="Chorismate_lyase_/UTRA_dom_sf"/>
</dbReference>
<dbReference type="NCBIfam" id="NF008656">
    <property type="entry name" value="PRK11655.1"/>
    <property type="match status" value="1"/>
</dbReference>
<dbReference type="PANTHER" id="PTHR38683">
    <property type="entry name" value="CHORISMATE PYRUVATE-LYASE"/>
    <property type="match status" value="1"/>
</dbReference>
<dbReference type="PANTHER" id="PTHR38683:SF1">
    <property type="entry name" value="CHORISMATE PYRUVATE-LYASE"/>
    <property type="match status" value="1"/>
</dbReference>
<dbReference type="Pfam" id="PF04345">
    <property type="entry name" value="Chor_lyase"/>
    <property type="match status" value="1"/>
</dbReference>
<dbReference type="SUPFAM" id="SSF64288">
    <property type="entry name" value="Chorismate lyase-like"/>
    <property type="match status" value="1"/>
</dbReference>
<accession>Q66FH1</accession>
<reference key="1">
    <citation type="journal article" date="2004" name="Proc. Natl. Acad. Sci. U.S.A.">
        <title>Insights into the evolution of Yersinia pestis through whole-genome comparison with Yersinia pseudotuberculosis.</title>
        <authorList>
            <person name="Chain P.S.G."/>
            <person name="Carniel E."/>
            <person name="Larimer F.W."/>
            <person name="Lamerdin J."/>
            <person name="Stoutland P.O."/>
            <person name="Regala W.M."/>
            <person name="Georgescu A.M."/>
            <person name="Vergez L.M."/>
            <person name="Land M.L."/>
            <person name="Motin V.L."/>
            <person name="Brubaker R.R."/>
            <person name="Fowler J."/>
            <person name="Hinnebusch J."/>
            <person name="Marceau M."/>
            <person name="Medigue C."/>
            <person name="Simonet M."/>
            <person name="Chenal-Francisque V."/>
            <person name="Souza B."/>
            <person name="Dacheux D."/>
            <person name="Elliott J.M."/>
            <person name="Derbise A."/>
            <person name="Hauser L.J."/>
            <person name="Garcia E."/>
        </authorList>
    </citation>
    <scope>NUCLEOTIDE SEQUENCE [LARGE SCALE GENOMIC DNA]</scope>
    <source>
        <strain>IP32953</strain>
    </source>
</reference>
<proteinExistence type="inferred from homology"/>
<organism>
    <name type="scientific">Yersinia pseudotuberculosis serotype I (strain IP32953)</name>
    <dbReference type="NCBI Taxonomy" id="273123"/>
    <lineage>
        <taxon>Bacteria</taxon>
        <taxon>Pseudomonadati</taxon>
        <taxon>Pseudomonadota</taxon>
        <taxon>Gammaproteobacteria</taxon>
        <taxon>Enterobacterales</taxon>
        <taxon>Yersiniaceae</taxon>
        <taxon>Yersinia</taxon>
    </lineage>
</organism>
<keyword id="KW-0963">Cytoplasm</keyword>
<keyword id="KW-0456">Lyase</keyword>
<keyword id="KW-0670">Pyruvate</keyword>
<keyword id="KW-0831">Ubiquinone biosynthesis</keyword>
<name>UBIC_YERPS</name>
<protein>
    <recommendedName>
        <fullName evidence="1">Chorismate pyruvate-lyase</fullName>
        <shortName evidence="1">CL</shortName>
        <shortName evidence="1">CPL</shortName>
        <ecNumber evidence="1">4.1.3.40</ecNumber>
    </recommendedName>
</protein>
<feature type="chain" id="PRO_0000240587" description="Chorismate pyruvate-lyase">
    <location>
        <begin position="1"/>
        <end position="174"/>
    </location>
</feature>
<feature type="binding site" evidence="1">
    <location>
        <position position="36"/>
    </location>
    <ligand>
        <name>substrate</name>
    </ligand>
</feature>
<feature type="binding site" evidence="1">
    <location>
        <position position="78"/>
    </location>
    <ligand>
        <name>substrate</name>
    </ligand>
</feature>
<feature type="binding site" evidence="1">
    <location>
        <position position="116"/>
    </location>
    <ligand>
        <name>substrate</name>
    </ligand>
</feature>
<feature type="binding site" evidence="1">
    <location>
        <position position="157"/>
    </location>
    <ligand>
        <name>substrate</name>
    </ligand>
</feature>
<gene>
    <name evidence="1" type="primary">ubiC</name>
    <name type="ordered locus">YPTB0366</name>
</gene>
<sequence>MFIGDASILKPIQWCATEHPELPADIADWLMELGSMTRRFEQHCQRVHVEPQRECFITRDALGEEAEHLPVSQRYWLREIVLFGDNVPWLLGRTVIPEETLSGPDRALVDLGTLPLGRYLFSGDALTRDYIHVGRQDNLWARRSLLRLSGNPLLLTEVFLPASPLYTHCDSIPK</sequence>
<evidence type="ECO:0000255" key="1">
    <source>
        <dbReference type="HAMAP-Rule" id="MF_01632"/>
    </source>
</evidence>
<comment type="function">
    <text evidence="1">Removes the pyruvyl group from chorismate, with concomitant aromatization of the ring, to provide 4-hydroxybenzoate (4HB) for the ubiquinone pathway.</text>
</comment>
<comment type="catalytic activity">
    <reaction evidence="1">
        <text>chorismate = 4-hydroxybenzoate + pyruvate</text>
        <dbReference type="Rhea" id="RHEA:16505"/>
        <dbReference type="ChEBI" id="CHEBI:15361"/>
        <dbReference type="ChEBI" id="CHEBI:17879"/>
        <dbReference type="ChEBI" id="CHEBI:29748"/>
        <dbReference type="EC" id="4.1.3.40"/>
    </reaction>
</comment>
<comment type="pathway">
    <text evidence="1">Cofactor biosynthesis; ubiquinone biosynthesis.</text>
</comment>
<comment type="subunit">
    <text evidence="1">Monomer.</text>
</comment>
<comment type="subcellular location">
    <subcellularLocation>
        <location evidence="1">Cytoplasm</location>
    </subcellularLocation>
</comment>
<comment type="similarity">
    <text evidence="1">Belongs to the UbiC family.</text>
</comment>